<organism>
    <name type="scientific">Synechocystis sp. (strain ATCC 27184 / PCC 6803 / Kazusa)</name>
    <dbReference type="NCBI Taxonomy" id="1111708"/>
    <lineage>
        <taxon>Bacteria</taxon>
        <taxon>Bacillati</taxon>
        <taxon>Cyanobacteriota</taxon>
        <taxon>Cyanophyceae</taxon>
        <taxon>Synechococcales</taxon>
        <taxon>Merismopediaceae</taxon>
        <taxon>Synechocystis</taxon>
    </lineage>
</organism>
<keyword id="KW-1003">Cell membrane</keyword>
<keyword id="KW-0472">Membrane</keyword>
<keyword id="KW-1185">Reference proteome</keyword>
<keyword id="KW-0812">Transmembrane</keyword>
<keyword id="KW-1133">Transmembrane helix</keyword>
<name>Y1169_SYNY3</name>
<proteinExistence type="inferred from homology"/>
<accession>P74805</accession>
<protein>
    <recommendedName>
        <fullName>UPF0057 membrane protein ssr1169</fullName>
    </recommendedName>
</protein>
<gene>
    <name type="ordered locus">ssr1169</name>
</gene>
<comment type="subcellular location">
    <subcellularLocation>
        <location evidence="2">Cell membrane</location>
        <topology evidence="2">Multi-pass membrane protein</topology>
    </subcellularLocation>
</comment>
<comment type="similarity">
    <text evidence="2">Belongs to the UPF0057 (PMP3) family.</text>
</comment>
<comment type="sequence caution" evidence="2">
    <conflict type="erroneous initiation">
        <sequence resource="EMBL-CDS" id="BAA10728"/>
    </conflict>
</comment>
<feature type="chain" id="PRO_0000194001" description="UPF0057 membrane protein ssr1169">
    <location>
        <begin position="1"/>
        <end position="54"/>
    </location>
</feature>
<feature type="transmembrane region" description="Helical" evidence="1">
    <location>
        <begin position="3"/>
        <end position="23"/>
    </location>
</feature>
<feature type="transmembrane region" description="Helical" evidence="1">
    <location>
        <begin position="31"/>
        <end position="51"/>
    </location>
</feature>
<dbReference type="EMBL" id="BA000022">
    <property type="protein sequence ID" value="BAA10728.1"/>
    <property type="status" value="ALT_INIT"/>
    <property type="molecule type" value="Genomic_DNA"/>
</dbReference>
<dbReference type="PIR" id="S77036">
    <property type="entry name" value="S77036"/>
</dbReference>
<dbReference type="SMR" id="P74805"/>
<dbReference type="STRING" id="1148.gene:10500232"/>
<dbReference type="PaxDb" id="1148-1673354"/>
<dbReference type="EnsemblBacteria" id="BAA10728">
    <property type="protein sequence ID" value="BAA10728"/>
    <property type="gene ID" value="BAA10728"/>
</dbReference>
<dbReference type="KEGG" id="syn:ssr1169"/>
<dbReference type="eggNOG" id="COG0401">
    <property type="taxonomic scope" value="Bacteria"/>
</dbReference>
<dbReference type="InParanoid" id="P74805"/>
<dbReference type="PhylomeDB" id="P74805"/>
<dbReference type="Proteomes" id="UP000001425">
    <property type="component" value="Chromosome"/>
</dbReference>
<dbReference type="GO" id="GO:0005886">
    <property type="term" value="C:plasma membrane"/>
    <property type="evidence" value="ECO:0007669"/>
    <property type="project" value="UniProtKB-SubCell"/>
</dbReference>
<dbReference type="InterPro" id="IPR000612">
    <property type="entry name" value="PMP3"/>
</dbReference>
<dbReference type="PANTHER" id="PTHR21659">
    <property type="entry name" value="HYDROPHOBIC PROTEIN RCI2 LOW TEMPERATURE AND SALT RESPONSIVE PROTEIN LTI6 -RELATED"/>
    <property type="match status" value="1"/>
</dbReference>
<dbReference type="PANTHER" id="PTHR21659:SF42">
    <property type="entry name" value="UPF0057 MEMBRANE PROTEIN ZK632.10-RELATED"/>
    <property type="match status" value="1"/>
</dbReference>
<dbReference type="Pfam" id="PF01679">
    <property type="entry name" value="Pmp3"/>
    <property type="match status" value="1"/>
</dbReference>
<dbReference type="PROSITE" id="PS01309">
    <property type="entry name" value="UPF0057"/>
    <property type="match status" value="1"/>
</dbReference>
<sequence length="54" mass="6090">MDIVKIICAILLPPLGVFLQVGIGKDFWINLLLTIFGLYILGLVHAIWVIARER</sequence>
<reference key="1">
    <citation type="journal article" date="1995" name="DNA Res.">
        <title>Sequence analysis of the genome of the unicellular cyanobacterium Synechocystis sp. strain PCC6803. I. Sequence features in the 1 Mb region from map positions 64% to 92% of the genome.</title>
        <authorList>
            <person name="Kaneko T."/>
            <person name="Tanaka A."/>
            <person name="Sato S."/>
            <person name="Kotani H."/>
            <person name="Sazuka T."/>
            <person name="Miyajima N."/>
            <person name="Sugiura M."/>
            <person name="Tabata S."/>
        </authorList>
    </citation>
    <scope>NUCLEOTIDE SEQUENCE [LARGE SCALE GENOMIC DNA]</scope>
    <source>
        <strain>ATCC 27184 / PCC 6803 / N-1</strain>
    </source>
</reference>
<reference key="2">
    <citation type="journal article" date="1996" name="DNA Res.">
        <title>Sequence analysis of the genome of the unicellular cyanobacterium Synechocystis sp. strain PCC6803. II. Sequence determination of the entire genome and assignment of potential protein-coding regions.</title>
        <authorList>
            <person name="Kaneko T."/>
            <person name="Sato S."/>
            <person name="Kotani H."/>
            <person name="Tanaka A."/>
            <person name="Asamizu E."/>
            <person name="Nakamura Y."/>
            <person name="Miyajima N."/>
            <person name="Hirosawa M."/>
            <person name="Sugiura M."/>
            <person name="Sasamoto S."/>
            <person name="Kimura T."/>
            <person name="Hosouchi T."/>
            <person name="Matsuno A."/>
            <person name="Muraki A."/>
            <person name="Nakazaki N."/>
            <person name="Naruo K."/>
            <person name="Okumura S."/>
            <person name="Shimpo S."/>
            <person name="Takeuchi C."/>
            <person name="Wada T."/>
            <person name="Watanabe A."/>
            <person name="Yamada M."/>
            <person name="Yasuda M."/>
            <person name="Tabata S."/>
        </authorList>
    </citation>
    <scope>NUCLEOTIDE SEQUENCE [LARGE SCALE GENOMIC DNA]</scope>
    <source>
        <strain>ATCC 27184 / PCC 6803 / Kazusa</strain>
    </source>
</reference>
<evidence type="ECO:0000255" key="1"/>
<evidence type="ECO:0000305" key="2"/>